<feature type="chain" id="PRO_1000052008" description="Large ribosomal subunit protein uL3">
    <location>
        <begin position="1"/>
        <end position="212"/>
    </location>
</feature>
<feature type="modified residue" description="N5-methylglutamine" evidence="1">
    <location>
        <position position="153"/>
    </location>
</feature>
<accession>A1KB27</accession>
<organism>
    <name type="scientific">Azoarcus sp. (strain BH72)</name>
    <dbReference type="NCBI Taxonomy" id="418699"/>
    <lineage>
        <taxon>Bacteria</taxon>
        <taxon>Pseudomonadati</taxon>
        <taxon>Pseudomonadota</taxon>
        <taxon>Betaproteobacteria</taxon>
        <taxon>Rhodocyclales</taxon>
        <taxon>Zoogloeaceae</taxon>
        <taxon>Azoarcus</taxon>
    </lineage>
</organism>
<sequence length="212" mass="22234">MSLGLVGRKVGMTRIFADDGRSIPVTVLDVSDNKVTQIKTPEADGYSAVQVAFGKRRASRVVKPIAGHLAKAGVEPSRVLKEFRVEPEGLASLKAGDQVSVEIFSVGQKVDVTGVSIGKGFSGPIKRHNFSSNRASHGNSVSHNSPGSIGMAQDPGRVFPGKRMAGQYGAVQRTTLGLEVVRVDAERQLLLVKGAVPGAKGGDVVVRPAIKA</sequence>
<keyword id="KW-0488">Methylation</keyword>
<keyword id="KW-1185">Reference proteome</keyword>
<keyword id="KW-0687">Ribonucleoprotein</keyword>
<keyword id="KW-0689">Ribosomal protein</keyword>
<keyword id="KW-0694">RNA-binding</keyword>
<keyword id="KW-0699">rRNA-binding</keyword>
<gene>
    <name evidence="1" type="primary">rplC</name>
    <name type="ordered locus">azo3417</name>
</gene>
<name>RL3_AZOSB</name>
<protein>
    <recommendedName>
        <fullName evidence="1">Large ribosomal subunit protein uL3</fullName>
    </recommendedName>
    <alternativeName>
        <fullName evidence="2">50S ribosomal protein L3</fullName>
    </alternativeName>
</protein>
<dbReference type="EMBL" id="AM406670">
    <property type="protein sequence ID" value="CAL96033.1"/>
    <property type="molecule type" value="Genomic_DNA"/>
</dbReference>
<dbReference type="RefSeq" id="WP_011767140.1">
    <property type="nucleotide sequence ID" value="NC_008702.1"/>
</dbReference>
<dbReference type="SMR" id="A1KB27"/>
<dbReference type="STRING" id="62928.azo3417"/>
<dbReference type="KEGG" id="aoa:dqs_3556"/>
<dbReference type="KEGG" id="azo:azo3417"/>
<dbReference type="eggNOG" id="COG0087">
    <property type="taxonomic scope" value="Bacteria"/>
</dbReference>
<dbReference type="HOGENOM" id="CLU_044142_4_1_4"/>
<dbReference type="OrthoDB" id="9806135at2"/>
<dbReference type="Proteomes" id="UP000002588">
    <property type="component" value="Chromosome"/>
</dbReference>
<dbReference type="GO" id="GO:0022625">
    <property type="term" value="C:cytosolic large ribosomal subunit"/>
    <property type="evidence" value="ECO:0007669"/>
    <property type="project" value="TreeGrafter"/>
</dbReference>
<dbReference type="GO" id="GO:0019843">
    <property type="term" value="F:rRNA binding"/>
    <property type="evidence" value="ECO:0007669"/>
    <property type="project" value="UniProtKB-UniRule"/>
</dbReference>
<dbReference type="GO" id="GO:0003735">
    <property type="term" value="F:structural constituent of ribosome"/>
    <property type="evidence" value="ECO:0007669"/>
    <property type="project" value="InterPro"/>
</dbReference>
<dbReference type="GO" id="GO:0006412">
    <property type="term" value="P:translation"/>
    <property type="evidence" value="ECO:0007669"/>
    <property type="project" value="UniProtKB-UniRule"/>
</dbReference>
<dbReference type="FunFam" id="2.40.30.10:FF:000004">
    <property type="entry name" value="50S ribosomal protein L3"/>
    <property type="match status" value="1"/>
</dbReference>
<dbReference type="FunFam" id="3.30.160.810:FF:000001">
    <property type="entry name" value="50S ribosomal protein L3"/>
    <property type="match status" value="1"/>
</dbReference>
<dbReference type="Gene3D" id="3.30.160.810">
    <property type="match status" value="1"/>
</dbReference>
<dbReference type="Gene3D" id="2.40.30.10">
    <property type="entry name" value="Translation factors"/>
    <property type="match status" value="1"/>
</dbReference>
<dbReference type="HAMAP" id="MF_01325_B">
    <property type="entry name" value="Ribosomal_uL3_B"/>
    <property type="match status" value="1"/>
</dbReference>
<dbReference type="InterPro" id="IPR000597">
    <property type="entry name" value="Ribosomal_uL3"/>
</dbReference>
<dbReference type="InterPro" id="IPR019927">
    <property type="entry name" value="Ribosomal_uL3_bac/org-type"/>
</dbReference>
<dbReference type="InterPro" id="IPR019926">
    <property type="entry name" value="Ribosomal_uL3_CS"/>
</dbReference>
<dbReference type="InterPro" id="IPR009000">
    <property type="entry name" value="Transl_B-barrel_sf"/>
</dbReference>
<dbReference type="NCBIfam" id="TIGR03625">
    <property type="entry name" value="L3_bact"/>
    <property type="match status" value="1"/>
</dbReference>
<dbReference type="PANTHER" id="PTHR11229">
    <property type="entry name" value="50S RIBOSOMAL PROTEIN L3"/>
    <property type="match status" value="1"/>
</dbReference>
<dbReference type="PANTHER" id="PTHR11229:SF16">
    <property type="entry name" value="LARGE RIBOSOMAL SUBUNIT PROTEIN UL3C"/>
    <property type="match status" value="1"/>
</dbReference>
<dbReference type="Pfam" id="PF00297">
    <property type="entry name" value="Ribosomal_L3"/>
    <property type="match status" value="1"/>
</dbReference>
<dbReference type="SUPFAM" id="SSF50447">
    <property type="entry name" value="Translation proteins"/>
    <property type="match status" value="1"/>
</dbReference>
<dbReference type="PROSITE" id="PS00474">
    <property type="entry name" value="RIBOSOMAL_L3"/>
    <property type="match status" value="1"/>
</dbReference>
<comment type="function">
    <text evidence="1">One of the primary rRNA binding proteins, it binds directly near the 3'-end of the 23S rRNA, where it nucleates assembly of the 50S subunit.</text>
</comment>
<comment type="subunit">
    <text evidence="1">Part of the 50S ribosomal subunit. Forms a cluster with proteins L14 and L19.</text>
</comment>
<comment type="PTM">
    <text evidence="1">Methylated by PrmB.</text>
</comment>
<comment type="similarity">
    <text evidence="1">Belongs to the universal ribosomal protein uL3 family.</text>
</comment>
<evidence type="ECO:0000255" key="1">
    <source>
        <dbReference type="HAMAP-Rule" id="MF_01325"/>
    </source>
</evidence>
<evidence type="ECO:0000305" key="2"/>
<proteinExistence type="inferred from homology"/>
<reference key="1">
    <citation type="journal article" date="2006" name="Nat. Biotechnol.">
        <title>Complete genome of the mutualistic, N2-fixing grass endophyte Azoarcus sp. strain BH72.</title>
        <authorList>
            <person name="Krause A."/>
            <person name="Ramakumar A."/>
            <person name="Bartels D."/>
            <person name="Battistoni F."/>
            <person name="Bekel T."/>
            <person name="Boch J."/>
            <person name="Boehm M."/>
            <person name="Friedrich F."/>
            <person name="Hurek T."/>
            <person name="Krause L."/>
            <person name="Linke B."/>
            <person name="McHardy A.C."/>
            <person name="Sarkar A."/>
            <person name="Schneiker S."/>
            <person name="Syed A.A."/>
            <person name="Thauer R."/>
            <person name="Vorhoelter F.-J."/>
            <person name="Weidner S."/>
            <person name="Puehler A."/>
            <person name="Reinhold-Hurek B."/>
            <person name="Kaiser O."/>
            <person name="Goesmann A."/>
        </authorList>
    </citation>
    <scope>NUCLEOTIDE SEQUENCE [LARGE SCALE GENOMIC DNA]</scope>
    <source>
        <strain>BH72</strain>
    </source>
</reference>